<protein>
    <recommendedName>
        <fullName>DNA-binding protein HBbu</fullName>
    </recommendedName>
</protein>
<accession>Q44625</accession>
<dbReference type="EMBL" id="U48686">
    <property type="protein sequence ID" value="AAC73108.1"/>
    <property type="molecule type" value="Genomic_DNA"/>
</dbReference>
<dbReference type="SMR" id="Q44625"/>
<dbReference type="GO" id="GO:0005829">
    <property type="term" value="C:cytosol"/>
    <property type="evidence" value="ECO:0007669"/>
    <property type="project" value="TreeGrafter"/>
</dbReference>
<dbReference type="GO" id="GO:0003677">
    <property type="term" value="F:DNA binding"/>
    <property type="evidence" value="ECO:0007669"/>
    <property type="project" value="UniProtKB-KW"/>
</dbReference>
<dbReference type="GO" id="GO:0030527">
    <property type="term" value="F:structural constituent of chromatin"/>
    <property type="evidence" value="ECO:0007669"/>
    <property type="project" value="InterPro"/>
</dbReference>
<dbReference type="GO" id="GO:0030261">
    <property type="term" value="P:chromosome condensation"/>
    <property type="evidence" value="ECO:0007669"/>
    <property type="project" value="UniProtKB-KW"/>
</dbReference>
<dbReference type="CDD" id="cd13836">
    <property type="entry name" value="IHF_B"/>
    <property type="match status" value="1"/>
</dbReference>
<dbReference type="Gene3D" id="4.10.520.10">
    <property type="entry name" value="IHF-like DNA-binding proteins"/>
    <property type="match status" value="1"/>
</dbReference>
<dbReference type="InterPro" id="IPR000119">
    <property type="entry name" value="Hist_DNA-bd"/>
</dbReference>
<dbReference type="InterPro" id="IPR020816">
    <property type="entry name" value="Histone-like_DNA-bd_CS"/>
</dbReference>
<dbReference type="InterPro" id="IPR010992">
    <property type="entry name" value="IHF-like_DNA-bd_dom_sf"/>
</dbReference>
<dbReference type="PANTHER" id="PTHR33175">
    <property type="entry name" value="DNA-BINDING PROTEIN HU"/>
    <property type="match status" value="1"/>
</dbReference>
<dbReference type="PANTHER" id="PTHR33175:SF3">
    <property type="entry name" value="DNA-BINDING PROTEIN HU-BETA"/>
    <property type="match status" value="1"/>
</dbReference>
<dbReference type="Pfam" id="PF00216">
    <property type="entry name" value="Bac_DNA_binding"/>
    <property type="match status" value="1"/>
</dbReference>
<dbReference type="PRINTS" id="PR01727">
    <property type="entry name" value="DNABINDINGHU"/>
</dbReference>
<dbReference type="SMART" id="SM00411">
    <property type="entry name" value="BHL"/>
    <property type="match status" value="1"/>
</dbReference>
<dbReference type="SUPFAM" id="SSF47729">
    <property type="entry name" value="IHF-like DNA-binding proteins"/>
    <property type="match status" value="1"/>
</dbReference>
<dbReference type="PROSITE" id="PS00045">
    <property type="entry name" value="HISTONE_LIKE"/>
    <property type="match status" value="1"/>
</dbReference>
<comment type="function">
    <text evidence="1">Histone-like DNA-binding protein which is capable of wrapping DNA to stabilize it, and thus to prevent its denaturation under extreme environmental conditions.</text>
</comment>
<comment type="similarity">
    <text evidence="2">Belongs to the bacterial histone-like protein family.</text>
</comment>
<sequence>MSFSRRPKVTKSDIVDQISLNIRNNNLKLEKKYIRLVIDAFFEELKSNLCSNNVIEFRSFGTFEVRKRRGRLNARNPQTGEYVKVLDHHVAYFRPGKDLKERVWGIKG</sequence>
<keyword id="KW-0226">DNA condensation</keyword>
<keyword id="KW-0238">DNA-binding</keyword>
<organism>
    <name type="scientific">Borrelia andersonii</name>
    <name type="common">Borreliella andersonii</name>
    <dbReference type="NCBI Taxonomy" id="42109"/>
    <lineage>
        <taxon>Bacteria</taxon>
        <taxon>Pseudomonadati</taxon>
        <taxon>Spirochaetota</taxon>
        <taxon>Spirochaetia</taxon>
        <taxon>Spirochaetales</taxon>
        <taxon>Borreliaceae</taxon>
        <taxon>Borreliella</taxon>
    </lineage>
</organism>
<gene>
    <name type="primary">hbb</name>
</gene>
<proteinExistence type="inferred from homology"/>
<feature type="chain" id="PRO_0000104918" description="DNA-binding protein HBbu">
    <location>
        <begin position="1"/>
        <end position="108"/>
    </location>
</feature>
<evidence type="ECO:0000250" key="1"/>
<evidence type="ECO:0000305" key="2"/>
<reference key="1">
    <citation type="journal article" date="1997" name="Int. J. Syst. Bacteriol.">
        <title>A phylogenetic analysis of Borrelia burgdorferi sensu lato based on sequence information from the hbb gene, coding for a histone-like protein.</title>
        <authorList>
            <person name="Valsangiacomo C."/>
            <person name="Balmelli T."/>
            <person name="Piffaretti J.C."/>
        </authorList>
    </citation>
    <scope>NUCLEOTIDE SEQUENCE [GENOMIC DNA]</scope>
    <source>
        <strain>19952</strain>
    </source>
</reference>
<name>DBH_BORAD</name>